<sequence>MDIVLLVKAAVMGIVEGLTEFLPISSTGHLILAGSLLGFDDDKAKVFDIAIQTGAIFAVILVYWQKIHSTVVALPRQAKARRLALNVVIGFLPAVVLGLLFGKMIKAHLFIPVVVASTFIIGGFIILWAEKRPPGSVRIEHVDDMTMWDALKVGLVQCFAMIPGTSRSGSTIIGGMLLGLSRQAATDFSFFLAIPTLIGAGAYSLYKERALLSVADIPLFSVGLVFSFISAWLCVRWLLKYISTHDFIPFAWYRIAFGIVVLATAWTGTVVWAE</sequence>
<protein>
    <recommendedName>
        <fullName evidence="1">Undecaprenyl-diphosphatase</fullName>
        <ecNumber evidence="1">3.6.1.27</ecNumber>
    </recommendedName>
    <alternativeName>
        <fullName evidence="1">Bacitracin resistance protein</fullName>
    </alternativeName>
    <alternativeName>
        <fullName evidence="1">Undecaprenyl pyrophosphate phosphatase</fullName>
    </alternativeName>
</protein>
<feature type="chain" id="PRO_1000213163" description="Undecaprenyl-diphosphatase">
    <location>
        <begin position="1"/>
        <end position="274"/>
    </location>
</feature>
<feature type="transmembrane region" description="Helical" evidence="1">
    <location>
        <begin position="44"/>
        <end position="64"/>
    </location>
</feature>
<feature type="transmembrane region" description="Helical" evidence="1">
    <location>
        <begin position="85"/>
        <end position="105"/>
    </location>
</feature>
<feature type="transmembrane region" description="Helical" evidence="1">
    <location>
        <begin position="109"/>
        <end position="129"/>
    </location>
</feature>
<feature type="transmembrane region" description="Helical" evidence="1">
    <location>
        <begin position="185"/>
        <end position="205"/>
    </location>
</feature>
<feature type="transmembrane region" description="Helical" evidence="1">
    <location>
        <begin position="214"/>
        <end position="234"/>
    </location>
</feature>
<feature type="transmembrane region" description="Helical" evidence="1">
    <location>
        <begin position="247"/>
        <end position="267"/>
    </location>
</feature>
<proteinExistence type="inferred from homology"/>
<dbReference type="EC" id="3.6.1.27" evidence="1"/>
<dbReference type="EMBL" id="CP001635">
    <property type="protein sequence ID" value="ACS20216.1"/>
    <property type="molecule type" value="Genomic_DNA"/>
</dbReference>
<dbReference type="SMR" id="C5CTM8"/>
<dbReference type="STRING" id="543728.Vapar_3599"/>
<dbReference type="KEGG" id="vap:Vapar_3599"/>
<dbReference type="eggNOG" id="COG1968">
    <property type="taxonomic scope" value="Bacteria"/>
</dbReference>
<dbReference type="HOGENOM" id="CLU_060296_2_0_4"/>
<dbReference type="OrthoDB" id="9808289at2"/>
<dbReference type="GO" id="GO:0005886">
    <property type="term" value="C:plasma membrane"/>
    <property type="evidence" value="ECO:0007669"/>
    <property type="project" value="UniProtKB-SubCell"/>
</dbReference>
<dbReference type="GO" id="GO:0050380">
    <property type="term" value="F:undecaprenyl-diphosphatase activity"/>
    <property type="evidence" value="ECO:0007669"/>
    <property type="project" value="UniProtKB-UniRule"/>
</dbReference>
<dbReference type="GO" id="GO:0071555">
    <property type="term" value="P:cell wall organization"/>
    <property type="evidence" value="ECO:0007669"/>
    <property type="project" value="UniProtKB-KW"/>
</dbReference>
<dbReference type="GO" id="GO:0009252">
    <property type="term" value="P:peptidoglycan biosynthetic process"/>
    <property type="evidence" value="ECO:0007669"/>
    <property type="project" value="UniProtKB-KW"/>
</dbReference>
<dbReference type="GO" id="GO:0008360">
    <property type="term" value="P:regulation of cell shape"/>
    <property type="evidence" value="ECO:0007669"/>
    <property type="project" value="UniProtKB-KW"/>
</dbReference>
<dbReference type="GO" id="GO:0046677">
    <property type="term" value="P:response to antibiotic"/>
    <property type="evidence" value="ECO:0007669"/>
    <property type="project" value="UniProtKB-UniRule"/>
</dbReference>
<dbReference type="HAMAP" id="MF_01006">
    <property type="entry name" value="Undec_diphosphatase"/>
    <property type="match status" value="1"/>
</dbReference>
<dbReference type="InterPro" id="IPR003824">
    <property type="entry name" value="UppP"/>
</dbReference>
<dbReference type="NCBIfam" id="NF001389">
    <property type="entry name" value="PRK00281.1-2"/>
    <property type="match status" value="1"/>
</dbReference>
<dbReference type="NCBIfam" id="NF001390">
    <property type="entry name" value="PRK00281.1-4"/>
    <property type="match status" value="1"/>
</dbReference>
<dbReference type="NCBIfam" id="TIGR00753">
    <property type="entry name" value="undec_PP_bacA"/>
    <property type="match status" value="1"/>
</dbReference>
<dbReference type="PANTHER" id="PTHR30622">
    <property type="entry name" value="UNDECAPRENYL-DIPHOSPHATASE"/>
    <property type="match status" value="1"/>
</dbReference>
<dbReference type="PANTHER" id="PTHR30622:SF3">
    <property type="entry name" value="UNDECAPRENYL-DIPHOSPHATASE"/>
    <property type="match status" value="1"/>
</dbReference>
<dbReference type="Pfam" id="PF02673">
    <property type="entry name" value="BacA"/>
    <property type="match status" value="1"/>
</dbReference>
<reference key="1">
    <citation type="journal article" date="2011" name="J. Bacteriol.">
        <title>Complete genome sequence of the metabolically versatile plant growth-promoting endophyte, Variovorax paradoxus S110.</title>
        <authorList>
            <person name="Han J.I."/>
            <person name="Choi H.K."/>
            <person name="Lee S.W."/>
            <person name="Orwin P.M."/>
            <person name="Kim J."/>
            <person name="Laroe S.L."/>
            <person name="Kim T.G."/>
            <person name="O'Neil J."/>
            <person name="Leadbetter J.R."/>
            <person name="Lee S.Y."/>
            <person name="Hur C.G."/>
            <person name="Spain J.C."/>
            <person name="Ovchinnikova G."/>
            <person name="Goodwin L."/>
            <person name="Han C."/>
        </authorList>
    </citation>
    <scope>NUCLEOTIDE SEQUENCE [LARGE SCALE GENOMIC DNA]</scope>
    <source>
        <strain>S110</strain>
    </source>
</reference>
<comment type="function">
    <text evidence="1">Catalyzes the dephosphorylation of undecaprenyl diphosphate (UPP). Confers resistance to bacitracin.</text>
</comment>
<comment type="catalytic activity">
    <reaction evidence="1">
        <text>di-trans,octa-cis-undecaprenyl diphosphate + H2O = di-trans,octa-cis-undecaprenyl phosphate + phosphate + H(+)</text>
        <dbReference type="Rhea" id="RHEA:28094"/>
        <dbReference type="ChEBI" id="CHEBI:15377"/>
        <dbReference type="ChEBI" id="CHEBI:15378"/>
        <dbReference type="ChEBI" id="CHEBI:43474"/>
        <dbReference type="ChEBI" id="CHEBI:58405"/>
        <dbReference type="ChEBI" id="CHEBI:60392"/>
        <dbReference type="EC" id="3.6.1.27"/>
    </reaction>
</comment>
<comment type="subcellular location">
    <subcellularLocation>
        <location evidence="1">Cell inner membrane</location>
        <topology evidence="1">Multi-pass membrane protein</topology>
    </subcellularLocation>
</comment>
<comment type="miscellaneous">
    <text>Bacitracin is thought to be involved in the inhibition of peptidoglycan synthesis by sequestering undecaprenyl diphosphate, thereby reducing the pool of lipid carrier available.</text>
</comment>
<comment type="similarity">
    <text evidence="1">Belongs to the UppP family.</text>
</comment>
<name>UPPP_VARPS</name>
<gene>
    <name evidence="1" type="primary">uppP</name>
    <name type="ordered locus">Vapar_3599</name>
</gene>
<keyword id="KW-0046">Antibiotic resistance</keyword>
<keyword id="KW-0997">Cell inner membrane</keyword>
<keyword id="KW-1003">Cell membrane</keyword>
<keyword id="KW-0133">Cell shape</keyword>
<keyword id="KW-0961">Cell wall biogenesis/degradation</keyword>
<keyword id="KW-0378">Hydrolase</keyword>
<keyword id="KW-0472">Membrane</keyword>
<keyword id="KW-0573">Peptidoglycan synthesis</keyword>
<keyword id="KW-0812">Transmembrane</keyword>
<keyword id="KW-1133">Transmembrane helix</keyword>
<evidence type="ECO:0000255" key="1">
    <source>
        <dbReference type="HAMAP-Rule" id="MF_01006"/>
    </source>
</evidence>
<organism>
    <name type="scientific">Variovorax paradoxus (strain S110)</name>
    <dbReference type="NCBI Taxonomy" id="543728"/>
    <lineage>
        <taxon>Bacteria</taxon>
        <taxon>Pseudomonadati</taxon>
        <taxon>Pseudomonadota</taxon>
        <taxon>Betaproteobacteria</taxon>
        <taxon>Burkholderiales</taxon>
        <taxon>Comamonadaceae</taxon>
        <taxon>Variovorax</taxon>
    </lineage>
</organism>
<accession>C5CTM8</accession>